<evidence type="ECO:0000255" key="1"/>
<evidence type="ECO:0000256" key="2">
    <source>
        <dbReference type="SAM" id="MobiDB-lite"/>
    </source>
</evidence>
<evidence type="ECO:0000269" key="3">
    <source>
    </source>
</evidence>
<evidence type="ECO:0000269" key="4">
    <source>
    </source>
</evidence>
<evidence type="ECO:0000269" key="5">
    <source>
    </source>
</evidence>
<evidence type="ECO:0000305" key="6"/>
<evidence type="ECO:0000312" key="7">
    <source>
        <dbReference type="EMBL" id="BAA87255.1"/>
    </source>
</evidence>
<evidence type="ECO:0000312" key="8">
    <source>
        <dbReference type="EMBL" id="CAA19010.1"/>
    </source>
</evidence>
<reference evidence="8" key="1">
    <citation type="journal article" date="2002" name="Nature">
        <title>The genome sequence of Schizosaccharomyces pombe.</title>
        <authorList>
            <person name="Wood V."/>
            <person name="Gwilliam R."/>
            <person name="Rajandream M.A."/>
            <person name="Lyne M.H."/>
            <person name="Lyne R."/>
            <person name="Stewart A."/>
            <person name="Sgouros J.G."/>
            <person name="Peat N."/>
            <person name="Hayles J."/>
            <person name="Baker S.G."/>
            <person name="Basham D."/>
            <person name="Bowman S."/>
            <person name="Brooks K."/>
            <person name="Brown D."/>
            <person name="Brown S."/>
            <person name="Chillingworth T."/>
            <person name="Churcher C.M."/>
            <person name="Collins M."/>
            <person name="Connor R."/>
            <person name="Cronin A."/>
            <person name="Davis P."/>
            <person name="Feltwell T."/>
            <person name="Fraser A."/>
            <person name="Gentles S."/>
            <person name="Goble A."/>
            <person name="Hamlin N."/>
            <person name="Harris D.E."/>
            <person name="Hidalgo J."/>
            <person name="Hodgson G."/>
            <person name="Holroyd S."/>
            <person name="Hornsby T."/>
            <person name="Howarth S."/>
            <person name="Huckle E.J."/>
            <person name="Hunt S."/>
            <person name="Jagels K."/>
            <person name="James K.D."/>
            <person name="Jones L."/>
            <person name="Jones M."/>
            <person name="Leather S."/>
            <person name="McDonald S."/>
            <person name="McLean J."/>
            <person name="Mooney P."/>
            <person name="Moule S."/>
            <person name="Mungall K.L."/>
            <person name="Murphy L.D."/>
            <person name="Niblett D."/>
            <person name="Odell C."/>
            <person name="Oliver K."/>
            <person name="O'Neil S."/>
            <person name="Pearson D."/>
            <person name="Quail M.A."/>
            <person name="Rabbinowitsch E."/>
            <person name="Rutherford K.M."/>
            <person name="Rutter S."/>
            <person name="Saunders D."/>
            <person name="Seeger K."/>
            <person name="Sharp S."/>
            <person name="Skelton J."/>
            <person name="Simmonds M.N."/>
            <person name="Squares R."/>
            <person name="Squares S."/>
            <person name="Stevens K."/>
            <person name="Taylor K."/>
            <person name="Taylor R.G."/>
            <person name="Tivey A."/>
            <person name="Walsh S.V."/>
            <person name="Warren T."/>
            <person name="Whitehead S."/>
            <person name="Woodward J.R."/>
            <person name="Volckaert G."/>
            <person name="Aert R."/>
            <person name="Robben J."/>
            <person name="Grymonprez B."/>
            <person name="Weltjens I."/>
            <person name="Vanstreels E."/>
            <person name="Rieger M."/>
            <person name="Schaefer M."/>
            <person name="Mueller-Auer S."/>
            <person name="Gabel C."/>
            <person name="Fuchs M."/>
            <person name="Duesterhoeft A."/>
            <person name="Fritzc C."/>
            <person name="Holzer E."/>
            <person name="Moestl D."/>
            <person name="Hilbert H."/>
            <person name="Borzym K."/>
            <person name="Langer I."/>
            <person name="Beck A."/>
            <person name="Lehrach H."/>
            <person name="Reinhardt R."/>
            <person name="Pohl T.M."/>
            <person name="Eger P."/>
            <person name="Zimmermann W."/>
            <person name="Wedler H."/>
            <person name="Wambutt R."/>
            <person name="Purnelle B."/>
            <person name="Goffeau A."/>
            <person name="Cadieu E."/>
            <person name="Dreano S."/>
            <person name="Gloux S."/>
            <person name="Lelaure V."/>
            <person name="Mottier S."/>
            <person name="Galibert F."/>
            <person name="Aves S.J."/>
            <person name="Xiang Z."/>
            <person name="Hunt C."/>
            <person name="Moore K."/>
            <person name="Hurst S.M."/>
            <person name="Lucas M."/>
            <person name="Rochet M."/>
            <person name="Gaillardin C."/>
            <person name="Tallada V.A."/>
            <person name="Garzon A."/>
            <person name="Thode G."/>
            <person name="Daga R.R."/>
            <person name="Cruzado L."/>
            <person name="Jimenez J."/>
            <person name="Sanchez M."/>
            <person name="del Rey F."/>
            <person name="Benito J."/>
            <person name="Dominguez A."/>
            <person name="Revuelta J.L."/>
            <person name="Moreno S."/>
            <person name="Armstrong J."/>
            <person name="Forsburg S.L."/>
            <person name="Cerutti L."/>
            <person name="Lowe T."/>
            <person name="McCombie W.R."/>
            <person name="Paulsen I."/>
            <person name="Potashkin J."/>
            <person name="Shpakovski G.V."/>
            <person name="Ussery D."/>
            <person name="Barrell B.G."/>
            <person name="Nurse P."/>
        </authorList>
    </citation>
    <scope>NUCLEOTIDE SEQUENCE [LARGE SCALE GENOMIC DNA]</scope>
    <source>
        <strain>972 / ATCC 24843</strain>
    </source>
</reference>
<reference evidence="6 7" key="2">
    <citation type="journal article" date="2000" name="Genes Cells">
        <title>Large-scale screening of intracellular protein localization in living fission yeast cells by the use of a GFP-fusion genomic DNA library.</title>
        <authorList>
            <person name="Ding D.-Q."/>
            <person name="Tomita Y."/>
            <person name="Yamamoto A."/>
            <person name="Chikashige Y."/>
            <person name="Haraguchi T."/>
            <person name="Hiraoka Y."/>
        </authorList>
    </citation>
    <scope>NUCLEOTIDE SEQUENCE [LARGE SCALE GENOMIC DNA] OF 38-238</scope>
    <scope>SUBCELLULAR LOCATION</scope>
    <source>
        <strain evidence="3">ATCC 38364 / 968</strain>
    </source>
</reference>
<reference evidence="6" key="3">
    <citation type="journal article" date="2006" name="Nat. Biotechnol.">
        <title>ORFeome cloning and global analysis of protein localization in the fission yeast Schizosaccharomyces pombe.</title>
        <authorList>
            <person name="Matsuyama A."/>
            <person name="Arai R."/>
            <person name="Yashiroda Y."/>
            <person name="Shirai A."/>
            <person name="Kamata A."/>
            <person name="Sekido S."/>
            <person name="Kobayashi Y."/>
            <person name="Hashimoto A."/>
            <person name="Hamamoto M."/>
            <person name="Hiraoka Y."/>
            <person name="Horinouchi S."/>
            <person name="Yoshida M."/>
        </authorList>
    </citation>
    <scope>SUBCELLULAR LOCATION [LARGE SCALE ANALYSIS]</scope>
</reference>
<reference key="4">
    <citation type="journal article" date="2008" name="FEBS Lett.">
        <title>Identification of the fnx1+ and fnx2+ genes for vacuolar amino acid transporters in Schizosaccharomyces pombe.</title>
        <authorList>
            <person name="Chardwiriyapreecha S."/>
            <person name="Shimazu M."/>
            <person name="Morita T."/>
            <person name="Sekito T."/>
            <person name="Akiyama K."/>
            <person name="Takegawa K."/>
            <person name="Kakinuma Y."/>
        </authorList>
    </citation>
    <scope>SUBCELLULAR LOCATION</scope>
    <scope>FUNCTION</scope>
</reference>
<comment type="function">
    <text evidence="5">MFS-type transporter involved in vacuolar amino acid uptake.</text>
</comment>
<comment type="subcellular location">
    <subcellularLocation>
        <location evidence="3 4">Vacuole</location>
    </subcellularLocation>
    <subcellularLocation>
        <location evidence="3 4">Membrane</location>
        <topology evidence="3 4">Multi-pass membrane protein</topology>
    </subcellularLocation>
</comment>
<comment type="similarity">
    <text evidence="1">Belongs to the major facilitator superfamily.</text>
</comment>
<protein>
    <recommendedName>
        <fullName>Vacuolar membrane amino acid uptake transporter fnx2</fullName>
    </recommendedName>
</protein>
<sequence length="577" mass="62900">MSNPRTKSPNTNRGQGLRSERSALLNDSLSSLNGNSSYDSIKDSSKNNKDVAEVNEYPRRPESSVSVVSNSPHRQDAATTNTVSTVSVSKVLPALLLGVVLAALDNTIVASTYTKIGAEFGKFSQVSWTATAYMISCTAFQPLFGKFCDIYGRKKTLLAAYCVFGIGCFLCGTSRSLWQLVAARAIAGIGGGGMNSTVSILMSDIVPLKQRGTYQGIINVFFAIGSSLGGPVGGYFADQYTWRIGFLIQVPLIAIAFLCVYFTLNLPHHNHVSFMTRFRKIDLKGLILLIIGVTTMTCAFTLGGNVREWNDPVVISLLIASSISYLSFVYVEAFVAFEPLAPMDVLTERTCLSSYLCNFFHSVANFGWIYGMPLFFQSIKNEGAEKSGIRLIPMIIGSSLGSLLGGAVISLTGNYKKITVGSYFFGSVAALFMLRYGYSNFNWEYAVYPFSGGLGNGIAVTTTLVAIIHASPSAFQASAIATSYLFRSNGCVLGVSISSSIVQTVLGIKLRKSLDFDVDELLHHLRKDISYVHRLPEEIRQTVLDALLGSIHYSFLFVSFMFFCAFVCSMFIKNRNL</sequence>
<gene>
    <name type="primary">fnx2</name>
    <name type="ORF">SPBC3E7.06c</name>
</gene>
<name>FNX2_SCHPO</name>
<feature type="chain" id="PRO_0000372714" description="Vacuolar membrane amino acid uptake transporter fnx2">
    <location>
        <begin position="1"/>
        <end position="577"/>
    </location>
</feature>
<feature type="transmembrane region" description="Helical" evidence="1">
    <location>
        <begin position="91"/>
        <end position="111"/>
    </location>
</feature>
<feature type="transmembrane region" description="Helical" evidence="1">
    <location>
        <begin position="123"/>
        <end position="145"/>
    </location>
</feature>
<feature type="transmembrane region" description="Helical" evidence="1">
    <location>
        <begin position="157"/>
        <end position="177"/>
    </location>
</feature>
<feature type="transmembrane region" description="Helical" evidence="1">
    <location>
        <begin position="186"/>
        <end position="206"/>
    </location>
</feature>
<feature type="transmembrane region" description="Helical" evidence="1">
    <location>
        <begin position="217"/>
        <end position="237"/>
    </location>
</feature>
<feature type="transmembrane region" description="Helical" evidence="1">
    <location>
        <begin position="244"/>
        <end position="264"/>
    </location>
</feature>
<feature type="transmembrane region" description="Helical" evidence="1">
    <location>
        <begin position="286"/>
        <end position="306"/>
    </location>
</feature>
<feature type="transmembrane region" description="Helical" evidence="1">
    <location>
        <begin position="317"/>
        <end position="337"/>
    </location>
</feature>
<feature type="transmembrane region" description="Helical" evidence="1">
    <location>
        <begin position="356"/>
        <end position="376"/>
    </location>
</feature>
<feature type="transmembrane region" description="Helical" evidence="1">
    <location>
        <begin position="391"/>
        <end position="411"/>
    </location>
</feature>
<feature type="transmembrane region" description="Helical" evidence="1">
    <location>
        <begin position="418"/>
        <end position="438"/>
    </location>
</feature>
<feature type="transmembrane region" description="Helical" evidence="1">
    <location>
        <begin position="448"/>
        <end position="468"/>
    </location>
</feature>
<feature type="transmembrane region" description="Helical" evidence="1">
    <location>
        <begin position="490"/>
        <end position="510"/>
    </location>
</feature>
<feature type="transmembrane region" description="Helical" evidence="1">
    <location>
        <begin position="547"/>
        <end position="567"/>
    </location>
</feature>
<feature type="region of interest" description="Disordered" evidence="2">
    <location>
        <begin position="1"/>
        <end position="80"/>
    </location>
</feature>
<feature type="compositionally biased region" description="Polar residues" evidence="2">
    <location>
        <begin position="1"/>
        <end position="14"/>
    </location>
</feature>
<feature type="compositionally biased region" description="Low complexity" evidence="2">
    <location>
        <begin position="22"/>
        <end position="39"/>
    </location>
</feature>
<feature type="compositionally biased region" description="Basic and acidic residues" evidence="2">
    <location>
        <begin position="40"/>
        <end position="62"/>
    </location>
</feature>
<feature type="sequence conflict" description="In Ref. 2; BAA87255." evidence="6" ref="2">
    <original>Y</original>
    <variation>N</variation>
    <location>
        <position position="38"/>
    </location>
</feature>
<accession>O59726</accession>
<accession>Q9US91</accession>
<keyword id="KW-0472">Membrane</keyword>
<keyword id="KW-1185">Reference proteome</keyword>
<keyword id="KW-0812">Transmembrane</keyword>
<keyword id="KW-1133">Transmembrane helix</keyword>
<keyword id="KW-0813">Transport</keyword>
<keyword id="KW-0926">Vacuole</keyword>
<proteinExistence type="inferred from homology"/>
<dbReference type="EMBL" id="CU329671">
    <property type="protein sequence ID" value="CAA19010.1"/>
    <property type="molecule type" value="Genomic_DNA"/>
</dbReference>
<dbReference type="EMBL" id="AB027951">
    <property type="protein sequence ID" value="BAA87255.1"/>
    <property type="molecule type" value="Genomic_DNA"/>
</dbReference>
<dbReference type="PIR" id="T40380">
    <property type="entry name" value="T40380"/>
</dbReference>
<dbReference type="RefSeq" id="NP_596093.1">
    <property type="nucleotide sequence ID" value="NM_001022009.2"/>
</dbReference>
<dbReference type="SMR" id="O59726"/>
<dbReference type="BioGRID" id="277531">
    <property type="interactions" value="3"/>
</dbReference>
<dbReference type="FunCoup" id="O59726">
    <property type="interactions" value="23"/>
</dbReference>
<dbReference type="STRING" id="284812.O59726"/>
<dbReference type="TCDB" id="2.A.1.48.4">
    <property type="family name" value="the major facilitator superfamily (mfs)"/>
</dbReference>
<dbReference type="iPTMnet" id="O59726"/>
<dbReference type="PaxDb" id="4896-SPBC3E7.06c.1"/>
<dbReference type="EnsemblFungi" id="SPBC3E7.06c.1">
    <property type="protein sequence ID" value="SPBC3E7.06c.1:pep"/>
    <property type="gene ID" value="SPBC3E7.06c"/>
</dbReference>
<dbReference type="GeneID" id="2541016"/>
<dbReference type="KEGG" id="spo:2541016"/>
<dbReference type="PomBase" id="SPBC3E7.06c">
    <property type="gene designation" value="fnx2"/>
</dbReference>
<dbReference type="VEuPathDB" id="FungiDB:SPBC3E7.06c"/>
<dbReference type="eggNOG" id="KOG0254">
    <property type="taxonomic scope" value="Eukaryota"/>
</dbReference>
<dbReference type="HOGENOM" id="CLU_000960_22_3_1"/>
<dbReference type="InParanoid" id="O59726"/>
<dbReference type="OMA" id="TICCYLM"/>
<dbReference type="PhylomeDB" id="O59726"/>
<dbReference type="PRO" id="PR:O59726"/>
<dbReference type="Proteomes" id="UP000002485">
    <property type="component" value="Chromosome II"/>
</dbReference>
<dbReference type="GO" id="GO:0005737">
    <property type="term" value="C:cytoplasm"/>
    <property type="evidence" value="ECO:0007005"/>
    <property type="project" value="PomBase"/>
</dbReference>
<dbReference type="GO" id="GO:0000324">
    <property type="term" value="C:fungal-type vacuole"/>
    <property type="evidence" value="ECO:0007005"/>
    <property type="project" value="PomBase"/>
</dbReference>
<dbReference type="GO" id="GO:0000329">
    <property type="term" value="C:fungal-type vacuole membrane"/>
    <property type="evidence" value="ECO:0000314"/>
    <property type="project" value="PomBase"/>
</dbReference>
<dbReference type="GO" id="GO:0015174">
    <property type="term" value="F:basic amino acid transmembrane transporter activity"/>
    <property type="evidence" value="ECO:0000318"/>
    <property type="project" value="GO_Central"/>
</dbReference>
<dbReference type="GO" id="GO:0015182">
    <property type="term" value="F:L-asparagine transmembrane transporter activity"/>
    <property type="evidence" value="ECO:0000315"/>
    <property type="project" value="PomBase"/>
</dbReference>
<dbReference type="GO" id="GO:0015188">
    <property type="term" value="F:L-isoleucine transmembrane transporter activity"/>
    <property type="evidence" value="ECO:0000315"/>
    <property type="project" value="PomBase"/>
</dbReference>
<dbReference type="GO" id="GO:0015189">
    <property type="term" value="F:L-lysine transmembrane transporter activity"/>
    <property type="evidence" value="ECO:0000315"/>
    <property type="project" value="PomBase"/>
</dbReference>
<dbReference type="GO" id="GO:1990591">
    <property type="term" value="P:asparagine transmembrane import into vacuole"/>
    <property type="evidence" value="ECO:0000315"/>
    <property type="project" value="PomBase"/>
</dbReference>
<dbReference type="GO" id="GO:0015802">
    <property type="term" value="P:basic amino acid transport"/>
    <property type="evidence" value="ECO:0000318"/>
    <property type="project" value="GO_Central"/>
</dbReference>
<dbReference type="GO" id="GO:1903714">
    <property type="term" value="P:isoleucine transmembrane transport"/>
    <property type="evidence" value="ECO:0000315"/>
    <property type="project" value="PomBase"/>
</dbReference>
<dbReference type="GO" id="GO:0090517">
    <property type="term" value="P:L-lysine transmembrane import into vacuole"/>
    <property type="evidence" value="ECO:0000315"/>
    <property type="project" value="PomBase"/>
</dbReference>
<dbReference type="GO" id="GO:0055085">
    <property type="term" value="P:transmembrane transport"/>
    <property type="evidence" value="ECO:0000318"/>
    <property type="project" value="GO_Central"/>
</dbReference>
<dbReference type="CDD" id="cd17502">
    <property type="entry name" value="MFS_Azr1_MDR_like"/>
    <property type="match status" value="1"/>
</dbReference>
<dbReference type="Gene3D" id="1.20.1250.20">
    <property type="entry name" value="MFS general substrate transporter like domains"/>
    <property type="match status" value="1"/>
</dbReference>
<dbReference type="InterPro" id="IPR011701">
    <property type="entry name" value="MFS"/>
</dbReference>
<dbReference type="InterPro" id="IPR020846">
    <property type="entry name" value="MFS_dom"/>
</dbReference>
<dbReference type="InterPro" id="IPR036259">
    <property type="entry name" value="MFS_trans_sf"/>
</dbReference>
<dbReference type="PANTHER" id="PTHR23501">
    <property type="entry name" value="MAJOR FACILITATOR SUPERFAMILY"/>
    <property type="match status" value="1"/>
</dbReference>
<dbReference type="PANTHER" id="PTHR23501:SF84">
    <property type="entry name" value="VACUOLAR MEMBRANE AMINO ACID UPTAKE TRANSPORTER FNX2"/>
    <property type="match status" value="1"/>
</dbReference>
<dbReference type="Pfam" id="PF07690">
    <property type="entry name" value="MFS_1"/>
    <property type="match status" value="1"/>
</dbReference>
<dbReference type="SUPFAM" id="SSF103473">
    <property type="entry name" value="MFS general substrate transporter"/>
    <property type="match status" value="1"/>
</dbReference>
<dbReference type="PROSITE" id="PS50850">
    <property type="entry name" value="MFS"/>
    <property type="match status" value="1"/>
</dbReference>
<organism>
    <name type="scientific">Schizosaccharomyces pombe (strain 972 / ATCC 24843)</name>
    <name type="common">Fission yeast</name>
    <dbReference type="NCBI Taxonomy" id="284812"/>
    <lineage>
        <taxon>Eukaryota</taxon>
        <taxon>Fungi</taxon>
        <taxon>Dikarya</taxon>
        <taxon>Ascomycota</taxon>
        <taxon>Taphrinomycotina</taxon>
        <taxon>Schizosaccharomycetes</taxon>
        <taxon>Schizosaccharomycetales</taxon>
        <taxon>Schizosaccharomycetaceae</taxon>
        <taxon>Schizosaccharomyces</taxon>
    </lineage>
</organism>